<feature type="signal peptide" evidence="1">
    <location>
        <begin position="1"/>
        <end position="28"/>
    </location>
</feature>
<feature type="chain" id="PRO_0000005370" description="Chordin-like protein 1">
    <location>
        <begin position="29"/>
        <end position="456"/>
    </location>
</feature>
<feature type="domain" description="VWFC 1" evidence="2">
    <location>
        <begin position="36"/>
        <end position="101"/>
    </location>
</feature>
<feature type="domain" description="VWFC 2" evidence="2">
    <location>
        <begin position="115"/>
        <end position="181"/>
    </location>
</feature>
<feature type="domain" description="VWFC 3" evidence="2">
    <location>
        <begin position="262"/>
        <end position="327"/>
    </location>
</feature>
<feature type="short sequence motif" description="Cell attachment site" evidence="1">
    <location>
        <begin position="181"/>
        <end position="183"/>
    </location>
</feature>
<feature type="glycosylation site" description="N-linked (GlcNAc...) asparagine" evidence="1">
    <location>
        <position position="120"/>
    </location>
</feature>
<feature type="glycosylation site" description="N-linked (GlcNAc...) asparagine" evidence="1">
    <location>
        <position position="295"/>
    </location>
</feature>
<proteinExistence type="evidence at transcript level"/>
<reference key="1">
    <citation type="journal article" date="2001" name="Science">
        <title>Ventroptin: a BMP-4 antagonist expressed in a double-gradient pattern in the retina.</title>
        <authorList>
            <person name="Sakuta H."/>
            <person name="Suzuki R."/>
            <person name="Takahashi H."/>
            <person name="Kato A."/>
            <person name="Shintani T."/>
            <person name="Iemura S."/>
            <person name="Yamamoto T.S."/>
            <person name="Ueno N."/>
            <person name="Noda M."/>
        </authorList>
    </citation>
    <scope>NUCLEOTIDE SEQUENCE [MRNA]</scope>
    <scope>SUBCELLULAR LOCATION</scope>
    <scope>FUNCTION</scope>
</reference>
<protein>
    <recommendedName>
        <fullName>Chordin-like protein 1</fullName>
    </recommendedName>
    <alternativeName>
        <fullName>Neuralin-1</fullName>
    </alternativeName>
    <alternativeName>
        <fullName>Neurogenesin-1</fullName>
    </alternativeName>
    <alternativeName>
        <fullName>Ventroptin</fullName>
    </alternativeName>
</protein>
<name>CRDL1_CHICK</name>
<dbReference type="EMBL" id="AF257352">
    <property type="protein sequence ID" value="AAK73359.1"/>
    <property type="molecule type" value="mRNA"/>
</dbReference>
<dbReference type="RefSeq" id="NP_989502.1">
    <property type="nucleotide sequence ID" value="NM_204171.2"/>
</dbReference>
<dbReference type="RefSeq" id="XP_015133640.2">
    <property type="nucleotide sequence ID" value="XM_015278154.4"/>
</dbReference>
<dbReference type="RefSeq" id="XP_040554589.1">
    <property type="nucleotide sequence ID" value="XM_040698655.2"/>
</dbReference>
<dbReference type="RefSeq" id="XP_046771306.1">
    <property type="nucleotide sequence ID" value="XM_046915350.1"/>
</dbReference>
<dbReference type="RefSeq" id="XP_046771307.1">
    <property type="nucleotide sequence ID" value="XM_046915351.1"/>
</dbReference>
<dbReference type="SMR" id="Q90ZD5"/>
<dbReference type="STRING" id="9031.ENSGALP00000013090"/>
<dbReference type="GlyCosmos" id="Q90ZD5">
    <property type="glycosylation" value="2 sites, No reported glycans"/>
</dbReference>
<dbReference type="GlyGen" id="Q90ZD5">
    <property type="glycosylation" value="2 sites"/>
</dbReference>
<dbReference type="PaxDb" id="9031-ENSGALP00000013090"/>
<dbReference type="Ensembl" id="ENSGALT00010037224.1">
    <property type="protein sequence ID" value="ENSGALP00010021609.1"/>
    <property type="gene ID" value="ENSGALG00010015494.1"/>
</dbReference>
<dbReference type="GeneID" id="373985"/>
<dbReference type="KEGG" id="gga:373985"/>
<dbReference type="CTD" id="91851"/>
<dbReference type="VEuPathDB" id="HostDB:geneid_373985"/>
<dbReference type="eggNOG" id="ENOG502QQFQ">
    <property type="taxonomic scope" value="Eukaryota"/>
</dbReference>
<dbReference type="GeneTree" id="ENSGT00940000160983"/>
<dbReference type="InParanoid" id="Q90ZD5"/>
<dbReference type="OMA" id="ECKKINC"/>
<dbReference type="OrthoDB" id="8173378at2759"/>
<dbReference type="PhylomeDB" id="Q90ZD5"/>
<dbReference type="PRO" id="PR:Q90ZD5"/>
<dbReference type="Proteomes" id="UP000000539">
    <property type="component" value="Chromosome 4"/>
</dbReference>
<dbReference type="GO" id="GO:0005576">
    <property type="term" value="C:extracellular region"/>
    <property type="evidence" value="ECO:0007669"/>
    <property type="project" value="UniProtKB-SubCell"/>
</dbReference>
<dbReference type="GO" id="GO:0036122">
    <property type="term" value="F:BMP binding"/>
    <property type="evidence" value="ECO:0000318"/>
    <property type="project" value="GO_Central"/>
</dbReference>
<dbReference type="GO" id="GO:0030154">
    <property type="term" value="P:cell differentiation"/>
    <property type="evidence" value="ECO:0000318"/>
    <property type="project" value="GO_Central"/>
</dbReference>
<dbReference type="GO" id="GO:0030514">
    <property type="term" value="P:negative regulation of BMP signaling pathway"/>
    <property type="evidence" value="ECO:0000318"/>
    <property type="project" value="GO_Central"/>
</dbReference>
<dbReference type="FunFam" id="2.10.70.10:FF:000005">
    <property type="entry name" value="Chordin-like 1, isoform CRA_c"/>
    <property type="match status" value="1"/>
</dbReference>
<dbReference type="Gene3D" id="6.20.200.20">
    <property type="match status" value="2"/>
</dbReference>
<dbReference type="Gene3D" id="2.10.70.10">
    <property type="entry name" value="Complement Module, domain 1"/>
    <property type="match status" value="1"/>
</dbReference>
<dbReference type="InterPro" id="IPR045717">
    <property type="entry name" value="CHRDL1/2"/>
</dbReference>
<dbReference type="InterPro" id="IPR045716">
    <property type="entry name" value="CHRDL_1/2_C"/>
</dbReference>
<dbReference type="InterPro" id="IPR001007">
    <property type="entry name" value="VWF_dom"/>
</dbReference>
<dbReference type="PANTHER" id="PTHR46303:SF2">
    <property type="entry name" value="CHORDIN-LIKE PROTEIN 1"/>
    <property type="match status" value="1"/>
</dbReference>
<dbReference type="PANTHER" id="PTHR46303">
    <property type="entry name" value="VWFC DOMAIN-CONTAINING PROTEIN"/>
    <property type="match status" value="1"/>
</dbReference>
<dbReference type="Pfam" id="PF19548">
    <property type="entry name" value="CHRDL_1_2_C"/>
    <property type="match status" value="1"/>
</dbReference>
<dbReference type="Pfam" id="PF00093">
    <property type="entry name" value="VWC"/>
    <property type="match status" value="3"/>
</dbReference>
<dbReference type="SMART" id="SM00214">
    <property type="entry name" value="VWC"/>
    <property type="match status" value="3"/>
</dbReference>
<dbReference type="SUPFAM" id="SSF57603">
    <property type="entry name" value="FnI-like domain"/>
    <property type="match status" value="3"/>
</dbReference>
<dbReference type="PROSITE" id="PS01208">
    <property type="entry name" value="VWFC_1"/>
    <property type="match status" value="3"/>
</dbReference>
<dbReference type="PROSITE" id="PS50184">
    <property type="entry name" value="VWFC_2"/>
    <property type="match status" value="3"/>
</dbReference>
<organism>
    <name type="scientific">Gallus gallus</name>
    <name type="common">Chicken</name>
    <dbReference type="NCBI Taxonomy" id="9031"/>
    <lineage>
        <taxon>Eukaryota</taxon>
        <taxon>Metazoa</taxon>
        <taxon>Chordata</taxon>
        <taxon>Craniata</taxon>
        <taxon>Vertebrata</taxon>
        <taxon>Euteleostomi</taxon>
        <taxon>Archelosauria</taxon>
        <taxon>Archosauria</taxon>
        <taxon>Dinosauria</taxon>
        <taxon>Saurischia</taxon>
        <taxon>Theropoda</taxon>
        <taxon>Coelurosauria</taxon>
        <taxon>Aves</taxon>
        <taxon>Neognathae</taxon>
        <taxon>Galloanserae</taxon>
        <taxon>Galliformes</taxon>
        <taxon>Phasianidae</taxon>
        <taxon>Phasianinae</taxon>
        <taxon>Gallus</taxon>
    </lineage>
</organism>
<keyword id="KW-0217">Developmental protein</keyword>
<keyword id="KW-0325">Glycoprotein</keyword>
<keyword id="KW-1185">Reference proteome</keyword>
<keyword id="KW-0677">Repeat</keyword>
<keyword id="KW-0964">Secreted</keyword>
<keyword id="KW-0732">Signal</keyword>
<evidence type="ECO:0000255" key="1"/>
<evidence type="ECO:0000255" key="2">
    <source>
        <dbReference type="PROSITE-ProRule" id="PRU00220"/>
    </source>
</evidence>
<evidence type="ECO:0000269" key="3">
    <source>
    </source>
</evidence>
<comment type="function">
    <text evidence="3">Seems to antagonize the function of BMP4 by binding to it and preventing its interaction with receptors.</text>
</comment>
<comment type="subcellular location">
    <subcellularLocation>
        <location evidence="3">Secreted</location>
    </subcellularLocation>
</comment>
<comment type="tissue specificity">
    <text>Mainly expressed in the ventral retina.</text>
</comment>
<gene>
    <name type="primary">CHRDL1</name>
    <name type="synonym">NRLN1</name>
    <name type="synonym">VOPT</name>
</gene>
<accession>Q90ZD5</accession>
<sequence length="456" mass="52399">MRRKWRSEDFHFVFFGVLCLLLIDRGKLEQVKHSDTYCVFQDKKYRVGERWHPYLEPYGLVYCVNCLCSENGNVLCSRIRCPSLHCPSPVHVPQLCCPRCPEDSLFSVSSKITGKSCEYNGTTYHHGEMFVAEGLFQNRQANQCAQCSCSEGNVYCGLKTCPKLTCSFPVSVPESCCPVCRGDGELSWEQADGDIFRQPANREARHSYHRPHYELSPSSTRQVVNVPRFPSARSNRGVLPDPQQASGTIVQIVINNKHKHGRVCVSNGKTYSHGESWHPNLRAFGIVECVLCTCNITKQECKKIHCPEQYPCKYPQKVEGKCCKVCPEEVPSQSFDNKDYFCGKETFPVYESIFTEEGETIRKIAVETEKPPQIEIHVWTIRKGILRHFYIEKMSKREFEELPYFKQITRTTSSQWKIFSEGEAQISQMCESRVCRTELEDLVKVLYLEKSEKGHC</sequence>